<protein>
    <recommendedName>
        <fullName evidence="1">ATP phosphoribosyltransferase</fullName>
        <shortName evidence="1">ATP-PRT</shortName>
        <shortName evidence="1">ATP-PRTase</shortName>
        <ecNumber evidence="1">2.4.2.17</ecNumber>
    </recommendedName>
</protein>
<accession>A2BVM2</accession>
<name>HIS1_PROM5</name>
<proteinExistence type="inferred from homology"/>
<dbReference type="EC" id="2.4.2.17" evidence="1"/>
<dbReference type="EMBL" id="CP000552">
    <property type="protein sequence ID" value="ABM71833.1"/>
    <property type="molecule type" value="Genomic_DNA"/>
</dbReference>
<dbReference type="RefSeq" id="WP_011819938.1">
    <property type="nucleotide sequence ID" value="NC_008817.1"/>
</dbReference>
<dbReference type="SMR" id="A2BVM2"/>
<dbReference type="STRING" id="167542.P9515_06241"/>
<dbReference type="GeneID" id="60202079"/>
<dbReference type="KEGG" id="pmc:P9515_06241"/>
<dbReference type="eggNOG" id="COG0040">
    <property type="taxonomic scope" value="Bacteria"/>
</dbReference>
<dbReference type="HOGENOM" id="CLU_038115_2_0_3"/>
<dbReference type="OrthoDB" id="9801867at2"/>
<dbReference type="UniPathway" id="UPA00031">
    <property type="reaction ID" value="UER00006"/>
</dbReference>
<dbReference type="Proteomes" id="UP000001589">
    <property type="component" value="Chromosome"/>
</dbReference>
<dbReference type="GO" id="GO:0005737">
    <property type="term" value="C:cytoplasm"/>
    <property type="evidence" value="ECO:0007669"/>
    <property type="project" value="UniProtKB-SubCell"/>
</dbReference>
<dbReference type="GO" id="GO:0005524">
    <property type="term" value="F:ATP binding"/>
    <property type="evidence" value="ECO:0007669"/>
    <property type="project" value="UniProtKB-KW"/>
</dbReference>
<dbReference type="GO" id="GO:0003879">
    <property type="term" value="F:ATP phosphoribosyltransferase activity"/>
    <property type="evidence" value="ECO:0007669"/>
    <property type="project" value="UniProtKB-UniRule"/>
</dbReference>
<dbReference type="GO" id="GO:0000105">
    <property type="term" value="P:L-histidine biosynthetic process"/>
    <property type="evidence" value="ECO:0007669"/>
    <property type="project" value="UniProtKB-UniRule"/>
</dbReference>
<dbReference type="CDD" id="cd13595">
    <property type="entry name" value="PBP2_HisGs"/>
    <property type="match status" value="1"/>
</dbReference>
<dbReference type="FunFam" id="3.40.190.10:FF:000008">
    <property type="entry name" value="ATP phosphoribosyltransferase"/>
    <property type="match status" value="1"/>
</dbReference>
<dbReference type="Gene3D" id="3.40.190.10">
    <property type="entry name" value="Periplasmic binding protein-like II"/>
    <property type="match status" value="2"/>
</dbReference>
<dbReference type="HAMAP" id="MF_01018">
    <property type="entry name" value="HisG_Short"/>
    <property type="match status" value="1"/>
</dbReference>
<dbReference type="InterPro" id="IPR013820">
    <property type="entry name" value="ATP_PRibTrfase_cat"/>
</dbReference>
<dbReference type="InterPro" id="IPR018198">
    <property type="entry name" value="ATP_PRibTrfase_CS"/>
</dbReference>
<dbReference type="InterPro" id="IPR001348">
    <property type="entry name" value="ATP_PRibTrfase_HisG"/>
</dbReference>
<dbReference type="InterPro" id="IPR024893">
    <property type="entry name" value="ATP_PRibTrfase_HisG_short"/>
</dbReference>
<dbReference type="NCBIfam" id="TIGR00070">
    <property type="entry name" value="hisG"/>
    <property type="match status" value="1"/>
</dbReference>
<dbReference type="PANTHER" id="PTHR21403:SF8">
    <property type="entry name" value="ATP PHOSPHORIBOSYLTRANSFERASE"/>
    <property type="match status" value="1"/>
</dbReference>
<dbReference type="PANTHER" id="PTHR21403">
    <property type="entry name" value="ATP PHOSPHORIBOSYLTRANSFERASE ATP-PRTASE"/>
    <property type="match status" value="1"/>
</dbReference>
<dbReference type="Pfam" id="PF01634">
    <property type="entry name" value="HisG"/>
    <property type="match status" value="1"/>
</dbReference>
<dbReference type="SUPFAM" id="SSF53850">
    <property type="entry name" value="Periplasmic binding protein-like II"/>
    <property type="match status" value="1"/>
</dbReference>
<dbReference type="PROSITE" id="PS01316">
    <property type="entry name" value="ATP_P_PHORIBOSYLTR"/>
    <property type="match status" value="1"/>
</dbReference>
<gene>
    <name evidence="1" type="primary">hisG</name>
    <name type="ordered locus">P9515_06241</name>
</gene>
<keyword id="KW-0028">Amino-acid biosynthesis</keyword>
<keyword id="KW-0067">ATP-binding</keyword>
<keyword id="KW-0963">Cytoplasm</keyword>
<keyword id="KW-0328">Glycosyltransferase</keyword>
<keyword id="KW-0368">Histidine biosynthesis</keyword>
<keyword id="KW-0547">Nucleotide-binding</keyword>
<keyword id="KW-0808">Transferase</keyword>
<comment type="function">
    <text evidence="1">Catalyzes the condensation of ATP and 5-phosphoribose 1-diphosphate to form N'-(5'-phosphoribosyl)-ATP (PR-ATP). Has a crucial role in the pathway because the rate of histidine biosynthesis seems to be controlled primarily by regulation of HisG enzymatic activity.</text>
</comment>
<comment type="catalytic activity">
    <reaction evidence="1">
        <text>1-(5-phospho-beta-D-ribosyl)-ATP + diphosphate = 5-phospho-alpha-D-ribose 1-diphosphate + ATP</text>
        <dbReference type="Rhea" id="RHEA:18473"/>
        <dbReference type="ChEBI" id="CHEBI:30616"/>
        <dbReference type="ChEBI" id="CHEBI:33019"/>
        <dbReference type="ChEBI" id="CHEBI:58017"/>
        <dbReference type="ChEBI" id="CHEBI:73183"/>
        <dbReference type="EC" id="2.4.2.17"/>
    </reaction>
</comment>
<comment type="pathway">
    <text evidence="1">Amino-acid biosynthesis; L-histidine biosynthesis; L-histidine from 5-phospho-alpha-D-ribose 1-diphosphate: step 1/9.</text>
</comment>
<comment type="subunit">
    <text evidence="1">Heteromultimer composed of HisG and HisZ subunits.</text>
</comment>
<comment type="subcellular location">
    <subcellularLocation>
        <location evidence="1">Cytoplasm</location>
    </subcellularLocation>
</comment>
<comment type="domain">
    <text>Lacks the C-terminal regulatory region which is replaced by HisZ.</text>
</comment>
<comment type="similarity">
    <text evidence="1">Belongs to the ATP phosphoribosyltransferase family. Short subfamily.</text>
</comment>
<reference key="1">
    <citation type="journal article" date="2007" name="PLoS Genet.">
        <title>Patterns and implications of gene gain and loss in the evolution of Prochlorococcus.</title>
        <authorList>
            <person name="Kettler G.C."/>
            <person name="Martiny A.C."/>
            <person name="Huang K."/>
            <person name="Zucker J."/>
            <person name="Coleman M.L."/>
            <person name="Rodrigue S."/>
            <person name="Chen F."/>
            <person name="Lapidus A."/>
            <person name="Ferriera S."/>
            <person name="Johnson J."/>
            <person name="Steglich C."/>
            <person name="Church G.M."/>
            <person name="Richardson P."/>
            <person name="Chisholm S.W."/>
        </authorList>
    </citation>
    <scope>NUCLEOTIDE SEQUENCE [LARGE SCALE GENOMIC DNA]</scope>
    <source>
        <strain>MIT 9515</strain>
    </source>
</reference>
<feature type="chain" id="PRO_1000063295" description="ATP phosphoribosyltransferase">
    <location>
        <begin position="1"/>
        <end position="212"/>
    </location>
</feature>
<organism>
    <name type="scientific">Prochlorococcus marinus (strain MIT 9515)</name>
    <dbReference type="NCBI Taxonomy" id="167542"/>
    <lineage>
        <taxon>Bacteria</taxon>
        <taxon>Bacillati</taxon>
        <taxon>Cyanobacteriota</taxon>
        <taxon>Cyanophyceae</taxon>
        <taxon>Synechococcales</taxon>
        <taxon>Prochlorococcaceae</taxon>
        <taxon>Prochlorococcus</taxon>
    </lineage>
</organism>
<sequence length="212" mass="22922">MITIALPKGALLEDSISIFKKAGLNFSDALLENNRSLTIESECKRAKALLVRNGDVPVYVSYGQADLGIVGYDVLQESELKVAKLLDLEFGGCHMSLAVKNTSNYSKPTDLPANCKVASKFTKTARAYFDDLNIPVEIVHLTGSVELGPITGMAEAIVDLVATGKTLKENGLSKIDDLFYSTARLIANPLSIRLDSNPLRDVILSIESFKGT</sequence>
<evidence type="ECO:0000255" key="1">
    <source>
        <dbReference type="HAMAP-Rule" id="MF_01018"/>
    </source>
</evidence>